<comment type="function">
    <text evidence="1 6">Regulator of Notch signaling, a signaling pathway involved in cell-cell communications that regulates a broad spectrum of cell-fate determinations (By similarity). Functions as a ubiquitin ligase protein in vivo, mediating 'Lys48'-linked polyubiquitination and promoting degradation of TBK1, targeting to TBK1 requires interaction with NLRP4.</text>
</comment>
<comment type="catalytic activity">
    <reaction evidence="2">
        <text>S-ubiquitinyl-[E2 ubiquitin-conjugating enzyme]-L-cysteine + [acceptor protein]-L-lysine = [E2 ubiquitin-conjugating enzyme]-L-cysteine + N(6)-ubiquitinyl-[acceptor protein]-L-lysine.</text>
        <dbReference type="EC" id="2.3.2.27"/>
    </reaction>
</comment>
<comment type="pathway">
    <text>Protein modification; protein ubiquitination.</text>
</comment>
<comment type="subunit">
    <text evidence="6">Interacts with NLRP4.</text>
</comment>
<comment type="subcellular location">
    <subcellularLocation>
        <location evidence="1">Cytoplasm</location>
    </subcellularLocation>
</comment>
<comment type="alternative products">
    <event type="alternative splicing"/>
    <isoform>
        <id>Q9Y2E6-1</id>
        <name>1</name>
        <sequence type="displayed"/>
    </isoform>
    <isoform>
        <id>Q9Y2E6-2</id>
        <name>2</name>
        <sequence type="described" ref="VSP_023784"/>
    </isoform>
</comment>
<comment type="domain">
    <text evidence="1">The WWE domains are thought to mediate some protein-protein interaction, and are frequently found in ubiquitin ligases.</text>
</comment>
<comment type="similarity">
    <text evidence="8">Belongs to the Deltex family.</text>
</comment>
<comment type="sequence caution" evidence="8">
    <conflict type="erroneous initiation">
        <sequence resource="EMBL-CDS" id="BAA76781"/>
    </conflict>
    <text>Extended N-terminus.</text>
</comment>
<dbReference type="EC" id="2.3.2.27" evidence="2"/>
<dbReference type="EMBL" id="AB023154">
    <property type="protein sequence ID" value="BAA76781.1"/>
    <property type="status" value="ALT_INIT"/>
    <property type="molecule type" value="mRNA"/>
</dbReference>
<dbReference type="EMBL" id="BC119011">
    <property type="protein sequence ID" value="AAI19012.1"/>
    <property type="molecule type" value="mRNA"/>
</dbReference>
<dbReference type="EMBL" id="BC122861">
    <property type="protein sequence ID" value="AAI22862.1"/>
    <property type="molecule type" value="mRNA"/>
</dbReference>
<dbReference type="CCDS" id="CCDS44612.1">
    <molecule id="Q9Y2E6-1"/>
</dbReference>
<dbReference type="CCDS" id="CCDS76408.1">
    <molecule id="Q9Y2E6-2"/>
</dbReference>
<dbReference type="RefSeq" id="NP_001287656.1">
    <molecule id="Q9Y2E6-2"/>
    <property type="nucleotide sequence ID" value="NM_001300727.2"/>
</dbReference>
<dbReference type="RefSeq" id="NP_055992.1">
    <molecule id="Q9Y2E6-1"/>
    <property type="nucleotide sequence ID" value="NM_015177.2"/>
</dbReference>
<dbReference type="RefSeq" id="XP_006718546.1">
    <property type="nucleotide sequence ID" value="XM_006718483.3"/>
</dbReference>
<dbReference type="SMR" id="Q9Y2E6"/>
<dbReference type="BioGRID" id="116827">
    <property type="interactions" value="21"/>
</dbReference>
<dbReference type="FunCoup" id="Q9Y2E6">
    <property type="interactions" value="973"/>
</dbReference>
<dbReference type="IntAct" id="Q9Y2E6">
    <property type="interactions" value="6"/>
</dbReference>
<dbReference type="STRING" id="9606.ENSP00000227451"/>
<dbReference type="GlyGen" id="Q9Y2E6">
    <property type="glycosylation" value="2 sites, 1 O-linked glycan (2 sites)"/>
</dbReference>
<dbReference type="iPTMnet" id="Q9Y2E6"/>
<dbReference type="PhosphoSitePlus" id="Q9Y2E6"/>
<dbReference type="BioMuta" id="DTX4"/>
<dbReference type="DMDM" id="134034097"/>
<dbReference type="jPOST" id="Q9Y2E6"/>
<dbReference type="MassIVE" id="Q9Y2E6"/>
<dbReference type="PaxDb" id="9606-ENSP00000227451"/>
<dbReference type="PeptideAtlas" id="Q9Y2E6"/>
<dbReference type="ProteomicsDB" id="85749">
    <molecule id="Q9Y2E6-1"/>
</dbReference>
<dbReference type="ProteomicsDB" id="85750">
    <molecule id="Q9Y2E6-2"/>
</dbReference>
<dbReference type="Antibodypedia" id="52744">
    <property type="antibodies" value="123 antibodies from 22 providers"/>
</dbReference>
<dbReference type="DNASU" id="23220"/>
<dbReference type="Ensembl" id="ENST00000227451.4">
    <molecule id="Q9Y2E6-1"/>
    <property type="protein sequence ID" value="ENSP00000227451.3"/>
    <property type="gene ID" value="ENSG00000110042.8"/>
</dbReference>
<dbReference type="Ensembl" id="ENST00000532982.5">
    <molecule id="Q9Y2E6-2"/>
    <property type="protein sequence ID" value="ENSP00000434055.1"/>
    <property type="gene ID" value="ENSG00000110042.8"/>
</dbReference>
<dbReference type="GeneID" id="23220"/>
<dbReference type="KEGG" id="hsa:23220"/>
<dbReference type="MANE-Select" id="ENST00000227451.4">
    <property type="protein sequence ID" value="ENSP00000227451.3"/>
    <property type="RefSeq nucleotide sequence ID" value="NM_015177.2"/>
    <property type="RefSeq protein sequence ID" value="NP_055992.1"/>
</dbReference>
<dbReference type="UCSC" id="uc001nnr.3">
    <molecule id="Q9Y2E6-1"/>
    <property type="organism name" value="human"/>
</dbReference>
<dbReference type="AGR" id="HGNC:29151"/>
<dbReference type="CTD" id="23220"/>
<dbReference type="DisGeNET" id="23220"/>
<dbReference type="GeneCards" id="DTX4"/>
<dbReference type="HGNC" id="HGNC:29151">
    <property type="gene designation" value="DTX4"/>
</dbReference>
<dbReference type="HPA" id="ENSG00000110042">
    <property type="expression patterns" value="Tissue enhanced (brain)"/>
</dbReference>
<dbReference type="MIM" id="616110">
    <property type="type" value="gene"/>
</dbReference>
<dbReference type="neXtProt" id="NX_Q9Y2E6"/>
<dbReference type="OpenTargets" id="ENSG00000110042"/>
<dbReference type="PharmGKB" id="PA134930720"/>
<dbReference type="VEuPathDB" id="HostDB:ENSG00000110042"/>
<dbReference type="eggNOG" id="ENOG502QQ9M">
    <property type="taxonomic scope" value="Eukaryota"/>
</dbReference>
<dbReference type="GeneTree" id="ENSGT00940000157122"/>
<dbReference type="HOGENOM" id="CLU_030422_4_0_1"/>
<dbReference type="InParanoid" id="Q9Y2E6"/>
<dbReference type="OMA" id="AIGFCYV"/>
<dbReference type="OrthoDB" id="2449614at2759"/>
<dbReference type="PAN-GO" id="Q9Y2E6">
    <property type="GO annotations" value="4 GO annotations based on evolutionary models"/>
</dbReference>
<dbReference type="PhylomeDB" id="Q9Y2E6"/>
<dbReference type="TreeFam" id="TF325526"/>
<dbReference type="PathwayCommons" id="Q9Y2E6"/>
<dbReference type="Reactome" id="R-HSA-1606341">
    <property type="pathway name" value="IRF3 mediated activation of type 1 IFN"/>
</dbReference>
<dbReference type="Reactome" id="R-HSA-2122948">
    <property type="pathway name" value="Activated NOTCH1 Transmits Signal to the Nucleus"/>
</dbReference>
<dbReference type="Reactome" id="R-HSA-3134975">
    <property type="pathway name" value="Regulation of innate immune responses to cytosolic DNA"/>
</dbReference>
<dbReference type="Reactome" id="R-HSA-3270619">
    <property type="pathway name" value="IRF3-mediated induction of type I IFN"/>
</dbReference>
<dbReference type="SignaLink" id="Q9Y2E6"/>
<dbReference type="SIGNOR" id="Q9Y2E6"/>
<dbReference type="UniPathway" id="UPA00143"/>
<dbReference type="BioGRID-ORCS" id="23220">
    <property type="hits" value="18 hits in 1188 CRISPR screens"/>
</dbReference>
<dbReference type="ChiTaRS" id="DTX4">
    <property type="organism name" value="human"/>
</dbReference>
<dbReference type="GenomeRNAi" id="23220"/>
<dbReference type="Pharos" id="Q9Y2E6">
    <property type="development level" value="Tbio"/>
</dbReference>
<dbReference type="PRO" id="PR:Q9Y2E6"/>
<dbReference type="Proteomes" id="UP000005640">
    <property type="component" value="Chromosome 11"/>
</dbReference>
<dbReference type="RNAct" id="Q9Y2E6">
    <property type="molecule type" value="protein"/>
</dbReference>
<dbReference type="Bgee" id="ENSG00000110042">
    <property type="expression patterns" value="Expressed in inferior olivary complex and 193 other cell types or tissues"/>
</dbReference>
<dbReference type="GO" id="GO:0005813">
    <property type="term" value="C:centrosome"/>
    <property type="evidence" value="ECO:0000314"/>
    <property type="project" value="UniProt"/>
</dbReference>
<dbReference type="GO" id="GO:0005737">
    <property type="term" value="C:cytoplasm"/>
    <property type="evidence" value="ECO:0000305"/>
    <property type="project" value="UniProt"/>
</dbReference>
<dbReference type="GO" id="GO:0005829">
    <property type="term" value="C:cytosol"/>
    <property type="evidence" value="ECO:0000304"/>
    <property type="project" value="Reactome"/>
</dbReference>
<dbReference type="GO" id="GO:0005654">
    <property type="term" value="C:nucleoplasm"/>
    <property type="evidence" value="ECO:0000318"/>
    <property type="project" value="GO_Central"/>
</dbReference>
<dbReference type="GO" id="GO:0061630">
    <property type="term" value="F:ubiquitin protein ligase activity"/>
    <property type="evidence" value="ECO:0000314"/>
    <property type="project" value="UniProt"/>
</dbReference>
<dbReference type="GO" id="GO:0004842">
    <property type="term" value="F:ubiquitin-protein transferase activity"/>
    <property type="evidence" value="ECO:0000304"/>
    <property type="project" value="Reactome"/>
</dbReference>
<dbReference type="GO" id="GO:0008270">
    <property type="term" value="F:zinc ion binding"/>
    <property type="evidence" value="ECO:0007669"/>
    <property type="project" value="UniProtKB-KW"/>
</dbReference>
<dbReference type="GO" id="GO:0045824">
    <property type="term" value="P:negative regulation of innate immune response"/>
    <property type="evidence" value="ECO:0000314"/>
    <property type="project" value="UniProt"/>
</dbReference>
<dbReference type="GO" id="GO:0007219">
    <property type="term" value="P:Notch signaling pathway"/>
    <property type="evidence" value="ECO:0000318"/>
    <property type="project" value="GO_Central"/>
</dbReference>
<dbReference type="GO" id="GO:0010498">
    <property type="term" value="P:proteasomal protein catabolic process"/>
    <property type="evidence" value="ECO:0000314"/>
    <property type="project" value="UniProt"/>
</dbReference>
<dbReference type="GO" id="GO:0043161">
    <property type="term" value="P:proteasome-mediated ubiquitin-dependent protein catabolic process"/>
    <property type="evidence" value="ECO:0000314"/>
    <property type="project" value="UniProt"/>
</dbReference>
<dbReference type="GO" id="GO:0070936">
    <property type="term" value="P:protein K48-linked ubiquitination"/>
    <property type="evidence" value="ECO:0000314"/>
    <property type="project" value="UniProt"/>
</dbReference>
<dbReference type="GO" id="GO:0016567">
    <property type="term" value="P:protein ubiquitination"/>
    <property type="evidence" value="ECO:0000318"/>
    <property type="project" value="GO_Central"/>
</dbReference>
<dbReference type="GO" id="GO:0032479">
    <property type="term" value="P:regulation of type I interferon production"/>
    <property type="evidence" value="ECO:0000304"/>
    <property type="project" value="Reactome"/>
</dbReference>
<dbReference type="CDD" id="cd09633">
    <property type="entry name" value="Deltex_C"/>
    <property type="match status" value="1"/>
</dbReference>
<dbReference type="CDD" id="cd16671">
    <property type="entry name" value="RING-H2_DTX1_4"/>
    <property type="match status" value="1"/>
</dbReference>
<dbReference type="FunFam" id="3.30.40.10:FF:000097">
    <property type="entry name" value="E3 ubiquitin-protein ligase DTX4"/>
    <property type="match status" value="1"/>
</dbReference>
<dbReference type="FunFam" id="3.30.720.50:FF:000004">
    <property type="entry name" value="Probable E3 ubiquitin-protein ligase DTX2"/>
    <property type="match status" value="1"/>
</dbReference>
<dbReference type="FunFam" id="3.30.720.50:FF:000005">
    <property type="entry name" value="Probable E3 ubiquitin-protein ligase DTX2"/>
    <property type="match status" value="1"/>
</dbReference>
<dbReference type="FunFam" id="3.30.390.130:FF:000001">
    <property type="entry name" value="Probable E3 ubiquitin-protein ligase DTX3"/>
    <property type="match status" value="1"/>
</dbReference>
<dbReference type="Gene3D" id="3.30.390.130">
    <property type="match status" value="1"/>
</dbReference>
<dbReference type="Gene3D" id="3.30.720.50">
    <property type="match status" value="2"/>
</dbReference>
<dbReference type="Gene3D" id="3.30.40.10">
    <property type="entry name" value="Zinc/RING finger domain, C3HC4 (zinc finger)"/>
    <property type="match status" value="1"/>
</dbReference>
<dbReference type="InterPro" id="IPR039396">
    <property type="entry name" value="Deltex_C"/>
</dbReference>
<dbReference type="InterPro" id="IPR039399">
    <property type="entry name" value="Deltex_C_sf"/>
</dbReference>
<dbReference type="InterPro" id="IPR039398">
    <property type="entry name" value="Deltex_fam"/>
</dbReference>
<dbReference type="InterPro" id="IPR018123">
    <property type="entry name" value="WWE-dom_subgr"/>
</dbReference>
<dbReference type="InterPro" id="IPR004170">
    <property type="entry name" value="WWE_dom"/>
</dbReference>
<dbReference type="InterPro" id="IPR037197">
    <property type="entry name" value="WWE_dom_sf"/>
</dbReference>
<dbReference type="InterPro" id="IPR018957">
    <property type="entry name" value="Znf_C3HC4_RING-type"/>
</dbReference>
<dbReference type="InterPro" id="IPR001841">
    <property type="entry name" value="Znf_RING"/>
</dbReference>
<dbReference type="InterPro" id="IPR013083">
    <property type="entry name" value="Znf_RING/FYVE/PHD"/>
</dbReference>
<dbReference type="PANTHER" id="PTHR12622">
    <property type="entry name" value="DELTEX-RELATED"/>
    <property type="match status" value="1"/>
</dbReference>
<dbReference type="Pfam" id="PF18102">
    <property type="entry name" value="DTC"/>
    <property type="match status" value="1"/>
</dbReference>
<dbReference type="Pfam" id="PF02825">
    <property type="entry name" value="WWE"/>
    <property type="match status" value="2"/>
</dbReference>
<dbReference type="Pfam" id="PF00097">
    <property type="entry name" value="zf-C3HC4"/>
    <property type="match status" value="1"/>
</dbReference>
<dbReference type="SMART" id="SM00184">
    <property type="entry name" value="RING"/>
    <property type="match status" value="1"/>
</dbReference>
<dbReference type="SMART" id="SM00678">
    <property type="entry name" value="WWE"/>
    <property type="match status" value="2"/>
</dbReference>
<dbReference type="SUPFAM" id="SSF57850">
    <property type="entry name" value="RING/U-box"/>
    <property type="match status" value="1"/>
</dbReference>
<dbReference type="SUPFAM" id="SSF117839">
    <property type="entry name" value="WWE domain"/>
    <property type="match status" value="2"/>
</dbReference>
<dbReference type="PROSITE" id="PS50918">
    <property type="entry name" value="WWE"/>
    <property type="match status" value="2"/>
</dbReference>
<dbReference type="PROSITE" id="PS50089">
    <property type="entry name" value="ZF_RING_2"/>
    <property type="match status" value="1"/>
</dbReference>
<sequence>MLLASAVVVWEWLNEHGRWRPYSPAVSHHIEAVVRAGPRAGGSVVLGQVDSRLAPYIIDLQSMNQFRQDTGTLRPVRRNYYDPSSAPGKGVVWEWENDNGSWTPYDMEVGITIQHAYEKQHPWIDLTSIGFSYVIDFNTMGQINRQTQRQRRVRRRLDLIYPMVTGTLPKAQSWPVSPGPATSPPMSPCSCPQCVLVMSVKAAVVNGSTGPLQLPVTRKNMPPPGVVKLPPLPGSGAKPLDSTGTIRGPLKTAPSQVIRRQASSMPTGTTMGSPASPPGPNSKTGRVALATLNRTNLQRLAIAQSRVLIASGVPTVPVKNLNGSSPVNPALAGITGILMSAAGLPVCLTRPPKLVLHPPPVSKSEIKSIPGVSNTSRKTTKKQAKKGKTPEEVLKKYLQKVRHPPDEDCTICMERLTAPSGYKGPQPTVKPDLVGKLSRCGHVYHIYCLVAMYNNGNKDGSLQCPTCKTIYGVKTGTQPPGKMEYHLIPHSLPGHPDCKTIRIIYSIPPGIQGPEHPNPGKSFSARGFPRHCYLPDSEKGRKVLKLLLVAWDRRLIFAIGTSSTTGESDTVIWNEVHHKTEFGSNLTGHGYPDANYLDNVLAELAAQGISEDSTAQEKD</sequence>
<name>DTX4_HUMAN</name>
<reference key="1">
    <citation type="journal article" date="1999" name="DNA Res.">
        <title>Prediction of the coding sequences of unidentified human genes. XIII. The complete sequences of 100 new cDNA clones from brain which code for large proteins in vitro.</title>
        <authorList>
            <person name="Nagase T."/>
            <person name="Ishikawa K."/>
            <person name="Suyama M."/>
            <person name="Kikuno R."/>
            <person name="Hirosawa M."/>
            <person name="Miyajima N."/>
            <person name="Tanaka A."/>
            <person name="Kotani H."/>
            <person name="Nomura N."/>
            <person name="Ohara O."/>
        </authorList>
    </citation>
    <scope>NUCLEOTIDE SEQUENCE [LARGE SCALE MRNA] (ISOFORM 1)</scope>
    <source>
        <tissue>Brain</tissue>
    </source>
</reference>
<reference key="2">
    <citation type="journal article" date="2004" name="Genome Res.">
        <title>The status, quality, and expansion of the NIH full-length cDNA project: the Mammalian Gene Collection (MGC).</title>
        <authorList>
            <consortium name="The MGC Project Team"/>
        </authorList>
    </citation>
    <scope>NUCLEOTIDE SEQUENCE [LARGE SCALE MRNA] (ISOFORM 2)</scope>
</reference>
<reference key="3">
    <citation type="journal article" date="2005" name="Mol. Cell. Biol.">
        <title>Normal immune system development in mice lacking the Deltex-1 RING finger domain.</title>
        <authorList>
            <person name="Storck S."/>
            <person name="Delbos F."/>
            <person name="Stadler N."/>
            <person name="Thirion-Delalande C."/>
            <person name="Bernex F."/>
            <person name="Verthuy C."/>
            <person name="Ferrier P."/>
            <person name="Weill J.-C."/>
            <person name="Reynaud C.-A."/>
        </authorList>
    </citation>
    <scope>IDENTIFICATION</scope>
</reference>
<reference key="4">
    <citation type="journal article" date="2012" name="Nat. Immunol.">
        <title>NLRP4 negatively regulates type I interferon signaling by targeting the kinase TBK1 for degradation via the ubiquitin ligase DTX4.</title>
        <authorList>
            <person name="Cui J."/>
            <person name="Li Y."/>
            <person name="Zhu L."/>
            <person name="Liu D."/>
            <person name="Songyang Z."/>
            <person name="Wang H.Y."/>
            <person name="Wang R.F."/>
        </authorList>
    </citation>
    <scope>FUNCTION AS E3 LIGASE</scope>
    <scope>INTERACTION WITH NLRP4</scope>
</reference>
<gene>
    <name type="primary">DTX4</name>
    <name type="synonym">KIAA0937</name>
    <name type="synonym">RNF155</name>
</gene>
<proteinExistence type="evidence at protein level"/>
<protein>
    <recommendedName>
        <fullName>E3 ubiquitin-protein ligase DTX4</fullName>
        <ecNumber evidence="2">2.3.2.27</ecNumber>
    </recommendedName>
    <alternativeName>
        <fullName>Protein deltex-4</fullName>
        <shortName>Deltex4</shortName>
    </alternativeName>
    <alternativeName>
        <fullName>RING finger protein 155</fullName>
    </alternativeName>
    <alternativeName>
        <fullName evidence="8">RING-type E3 ubiquitin transferase DTX4</fullName>
    </alternativeName>
</protein>
<accession>Q9Y2E6</accession>
<accession>Q0VF38</accession>
<feature type="chain" id="PRO_0000280555" description="E3 ubiquitin-protein ligase DTX4">
    <location>
        <begin position="1"/>
        <end position="619"/>
    </location>
</feature>
<feature type="domain" description="WWE 1" evidence="4">
    <location>
        <begin position="1"/>
        <end position="78"/>
    </location>
</feature>
<feature type="domain" description="WWE 2" evidence="4">
    <location>
        <begin position="79"/>
        <end position="155"/>
    </location>
</feature>
<feature type="zinc finger region" description="RING-type; atypical" evidence="3">
    <location>
        <begin position="409"/>
        <end position="468"/>
    </location>
</feature>
<feature type="region of interest" description="Disordered" evidence="5">
    <location>
        <begin position="238"/>
        <end position="281"/>
    </location>
</feature>
<feature type="region of interest" description="Disordered" evidence="5">
    <location>
        <begin position="358"/>
        <end position="389"/>
    </location>
</feature>
<feature type="compositionally biased region" description="Polar residues" evidence="5">
    <location>
        <begin position="261"/>
        <end position="273"/>
    </location>
</feature>
<feature type="compositionally biased region" description="Basic residues" evidence="5">
    <location>
        <begin position="378"/>
        <end position="387"/>
    </location>
</feature>
<feature type="splice variant" id="VSP_023784" description="In isoform 2." evidence="7">
    <location>
        <begin position="1"/>
        <end position="106"/>
    </location>
</feature>
<evidence type="ECO:0000250" key="1"/>
<evidence type="ECO:0000250" key="2">
    <source>
        <dbReference type="UniProtKB" id="Q61010"/>
    </source>
</evidence>
<evidence type="ECO:0000255" key="3">
    <source>
        <dbReference type="PROSITE-ProRule" id="PRU00175"/>
    </source>
</evidence>
<evidence type="ECO:0000255" key="4">
    <source>
        <dbReference type="PROSITE-ProRule" id="PRU00248"/>
    </source>
</evidence>
<evidence type="ECO:0000256" key="5">
    <source>
        <dbReference type="SAM" id="MobiDB-lite"/>
    </source>
</evidence>
<evidence type="ECO:0000269" key="6">
    <source>
    </source>
</evidence>
<evidence type="ECO:0000303" key="7">
    <source>
    </source>
</evidence>
<evidence type="ECO:0000305" key="8"/>
<keyword id="KW-0025">Alternative splicing</keyword>
<keyword id="KW-0963">Cytoplasm</keyword>
<keyword id="KW-0479">Metal-binding</keyword>
<keyword id="KW-0914">Notch signaling pathway</keyword>
<keyword id="KW-1267">Proteomics identification</keyword>
<keyword id="KW-1185">Reference proteome</keyword>
<keyword id="KW-0677">Repeat</keyword>
<keyword id="KW-0808">Transferase</keyword>
<keyword id="KW-0833">Ubl conjugation pathway</keyword>
<keyword id="KW-0862">Zinc</keyword>
<keyword id="KW-0863">Zinc-finger</keyword>
<organism>
    <name type="scientific">Homo sapiens</name>
    <name type="common">Human</name>
    <dbReference type="NCBI Taxonomy" id="9606"/>
    <lineage>
        <taxon>Eukaryota</taxon>
        <taxon>Metazoa</taxon>
        <taxon>Chordata</taxon>
        <taxon>Craniata</taxon>
        <taxon>Vertebrata</taxon>
        <taxon>Euteleostomi</taxon>
        <taxon>Mammalia</taxon>
        <taxon>Eutheria</taxon>
        <taxon>Euarchontoglires</taxon>
        <taxon>Primates</taxon>
        <taxon>Haplorrhini</taxon>
        <taxon>Catarrhini</taxon>
        <taxon>Hominidae</taxon>
        <taxon>Homo</taxon>
    </lineage>
</organism>